<sequence>GGETGNDAKAMWFGPRL</sequence>
<name>PPK5_PANSS</name>
<comment type="function">
    <text evidence="1">Myoactive.</text>
</comment>
<comment type="subcellular location">
    <subcellularLocation>
        <location evidence="5">Secreted</location>
    </subcellularLocation>
</comment>
<comment type="similarity">
    <text evidence="2">Belongs to the pyrokinin family.</text>
</comment>
<reference evidence="5" key="1">
    <citation type="journal article" date="2009" name="BMC Evol. Biol.">
        <title>A proteomic approach for studying insect phylogeny: CAPA peptides of ancient insect taxa (Dictyoptera, Blattoptera) as a test case.</title>
        <authorList>
            <person name="Roth S."/>
            <person name="Fromm B."/>
            <person name="Gaede G."/>
            <person name="Predel R."/>
        </authorList>
    </citation>
    <scope>PROTEIN SEQUENCE</scope>
    <scope>AMIDATION AT LEU-17</scope>
    <source>
        <tissue evidence="3">Abdominal perisympathetic organs</tissue>
    </source>
</reference>
<keyword id="KW-0027">Amidation</keyword>
<keyword id="KW-0903">Direct protein sequencing</keyword>
<keyword id="KW-0527">Neuropeptide</keyword>
<keyword id="KW-0964">Secreted</keyword>
<accession>P85696</accession>
<evidence type="ECO:0000250" key="1">
    <source>
        <dbReference type="UniProtKB" id="P82617"/>
    </source>
</evidence>
<evidence type="ECO:0000255" key="2"/>
<evidence type="ECO:0000269" key="3">
    <source>
    </source>
</evidence>
<evidence type="ECO:0000303" key="4">
    <source>
    </source>
</evidence>
<evidence type="ECO:0000305" key="5"/>
<proteinExistence type="evidence at protein level"/>
<protein>
    <recommendedName>
        <fullName evidence="1">Pyrokinin-5</fullName>
    </recommendedName>
    <alternativeName>
        <fullName evidence="1">FXPRL-amide</fullName>
    </alternativeName>
    <alternativeName>
        <fullName evidence="4">PanSp-Capa-PK</fullName>
    </alternativeName>
</protein>
<feature type="peptide" id="PRO_0000378708" description="Pyrokinin-5" evidence="3">
    <location>
        <begin position="1"/>
        <end position="17"/>
    </location>
</feature>
<feature type="modified residue" description="Leucine amide" evidence="3">
    <location>
        <position position="17"/>
    </location>
</feature>
<organism>
    <name type="scientific">Panchlora sp. (strain SR-2005)</name>
    <name type="common">Cockroach</name>
    <dbReference type="NCBI Taxonomy" id="348758"/>
    <lineage>
        <taxon>Eukaryota</taxon>
        <taxon>Metazoa</taxon>
        <taxon>Ecdysozoa</taxon>
        <taxon>Arthropoda</taxon>
        <taxon>Hexapoda</taxon>
        <taxon>Insecta</taxon>
        <taxon>Pterygota</taxon>
        <taxon>Neoptera</taxon>
        <taxon>Polyneoptera</taxon>
        <taxon>Dictyoptera</taxon>
        <taxon>Blattodea</taxon>
        <taxon>Blaberoidea</taxon>
        <taxon>Blaberidae</taxon>
        <taxon>Panchlorinae</taxon>
        <taxon>Panchlora</taxon>
    </lineage>
</organism>
<dbReference type="GO" id="GO:0005576">
    <property type="term" value="C:extracellular region"/>
    <property type="evidence" value="ECO:0007669"/>
    <property type="project" value="UniProtKB-SubCell"/>
</dbReference>
<dbReference type="GO" id="GO:0005184">
    <property type="term" value="F:neuropeptide hormone activity"/>
    <property type="evidence" value="ECO:0007669"/>
    <property type="project" value="InterPro"/>
</dbReference>
<dbReference type="GO" id="GO:0007218">
    <property type="term" value="P:neuropeptide signaling pathway"/>
    <property type="evidence" value="ECO:0007669"/>
    <property type="project" value="UniProtKB-KW"/>
</dbReference>
<dbReference type="InterPro" id="IPR001484">
    <property type="entry name" value="Pyrokinin_CS"/>
</dbReference>
<dbReference type="PROSITE" id="PS00539">
    <property type="entry name" value="PYROKININ"/>
    <property type="match status" value="1"/>
</dbReference>